<proteinExistence type="evidence at transcript level"/>
<feature type="signal peptide" evidence="1">
    <location>
        <begin position="1"/>
        <end position="19"/>
    </location>
</feature>
<feature type="chain" id="PRO_0000309747" description="Serotransferrin">
    <location>
        <begin position="20"/>
        <end position="698"/>
    </location>
</feature>
<feature type="domain" description="Transferrin-like 1" evidence="5">
    <location>
        <begin position="25"/>
        <end position="347"/>
    </location>
</feature>
<feature type="domain" description="Transferrin-like 2" evidence="5">
    <location>
        <begin position="361"/>
        <end position="683"/>
    </location>
</feature>
<feature type="binding site" evidence="5">
    <location>
        <position position="82"/>
    </location>
    <ligand>
        <name>Fe(3+)</name>
        <dbReference type="ChEBI" id="CHEBI:29034"/>
        <label>1</label>
    </ligand>
</feature>
<feature type="binding site" evidence="5">
    <location>
        <position position="114"/>
    </location>
    <ligand>
        <name>Fe(3+)</name>
        <dbReference type="ChEBI" id="CHEBI:29034"/>
        <label>1</label>
    </ligand>
</feature>
<feature type="binding site" evidence="5">
    <location>
        <position position="139"/>
    </location>
    <ligand>
        <name>hydrogencarbonate</name>
        <dbReference type="ChEBI" id="CHEBI:17544"/>
        <label>1</label>
    </ligand>
</feature>
<feature type="binding site" evidence="5">
    <location>
        <position position="143"/>
    </location>
    <ligand>
        <name>hydrogencarbonate</name>
        <dbReference type="ChEBI" id="CHEBI:17544"/>
        <label>1</label>
    </ligand>
</feature>
<feature type="binding site" evidence="5">
    <location>
        <position position="145"/>
    </location>
    <ligand>
        <name>hydrogencarbonate</name>
        <dbReference type="ChEBI" id="CHEBI:17544"/>
        <label>1</label>
    </ligand>
</feature>
<feature type="binding site" evidence="5">
    <location>
        <position position="146"/>
    </location>
    <ligand>
        <name>hydrogencarbonate</name>
        <dbReference type="ChEBI" id="CHEBI:17544"/>
        <label>1</label>
    </ligand>
</feature>
<feature type="binding site" evidence="5">
    <location>
        <position position="207"/>
    </location>
    <ligand>
        <name>Fe(3+)</name>
        <dbReference type="ChEBI" id="CHEBI:29034"/>
        <label>1</label>
    </ligand>
</feature>
<feature type="binding site" evidence="5">
    <location>
        <position position="268"/>
    </location>
    <ligand>
        <name>Fe(3+)</name>
        <dbReference type="ChEBI" id="CHEBI:29034"/>
        <label>1</label>
    </ligand>
</feature>
<feature type="binding site" evidence="5">
    <location>
        <position position="411"/>
    </location>
    <ligand>
        <name>Fe(3+)</name>
        <dbReference type="ChEBI" id="CHEBI:29034"/>
        <label>2</label>
    </ligand>
</feature>
<feature type="binding site" evidence="5">
    <location>
        <position position="445"/>
    </location>
    <ligand>
        <name>Fe(3+)</name>
        <dbReference type="ChEBI" id="CHEBI:29034"/>
        <label>2</label>
    </ligand>
</feature>
<feature type="binding site" evidence="5">
    <location>
        <position position="471"/>
    </location>
    <ligand>
        <name>hydrogencarbonate</name>
        <dbReference type="ChEBI" id="CHEBI:17544"/>
        <label>2</label>
    </ligand>
</feature>
<feature type="binding site" evidence="5">
    <location>
        <position position="475"/>
    </location>
    <ligand>
        <name>hydrogencarbonate</name>
        <dbReference type="ChEBI" id="CHEBI:17544"/>
        <label>2</label>
    </ligand>
</feature>
<feature type="binding site" evidence="5">
    <location>
        <position position="477"/>
    </location>
    <ligand>
        <name>hydrogencarbonate</name>
        <dbReference type="ChEBI" id="CHEBI:17544"/>
        <label>2</label>
    </ligand>
</feature>
<feature type="binding site" evidence="5">
    <location>
        <position position="478"/>
    </location>
    <ligand>
        <name>hydrogencarbonate</name>
        <dbReference type="ChEBI" id="CHEBI:17544"/>
        <label>2</label>
    </ligand>
</feature>
<feature type="binding site" evidence="5">
    <location>
        <position position="536"/>
    </location>
    <ligand>
        <name>Fe(3+)</name>
        <dbReference type="ChEBI" id="CHEBI:29034"/>
        <label>2</label>
    </ligand>
</feature>
<feature type="binding site" evidence="5">
    <location>
        <position position="604"/>
    </location>
    <ligand>
        <name>Fe(3+)</name>
        <dbReference type="ChEBI" id="CHEBI:29034"/>
        <label>2</label>
    </ligand>
</feature>
<feature type="modified residue" description="Dimethylated arginine" evidence="3">
    <location>
        <position position="42"/>
    </location>
</feature>
<feature type="modified residue" description="Phosphoserine" evidence="2">
    <location>
        <position position="389"/>
    </location>
</feature>
<feature type="modified residue" description="Phosphoserine" evidence="2">
    <location>
        <position position="685"/>
    </location>
</feature>
<feature type="glycosylation site" description="O-linked (GalNAc...) serine" evidence="1">
    <location>
        <position position="51"/>
    </location>
</feature>
<feature type="glycosylation site" description="N-linked (GlcNAc...) asparagine" evidence="4">
    <location>
        <position position="630"/>
    </location>
</feature>
<feature type="disulfide bond" evidence="5">
    <location>
        <begin position="28"/>
        <end position="67"/>
    </location>
</feature>
<feature type="disulfide bond" evidence="5">
    <location>
        <begin position="38"/>
        <end position="58"/>
    </location>
</feature>
<feature type="disulfide bond" evidence="5">
    <location>
        <begin position="137"/>
        <end position="213"/>
    </location>
</feature>
<feature type="disulfide bond" evidence="5">
    <location>
        <begin position="156"/>
        <end position="350"/>
    </location>
</feature>
<feature type="disulfide bond" evidence="5">
    <location>
        <begin position="177"/>
        <end position="193"/>
    </location>
</feature>
<feature type="disulfide bond" evidence="5">
    <location>
        <begin position="180"/>
        <end position="196"/>
    </location>
</feature>
<feature type="disulfide bond" evidence="5">
    <location>
        <begin position="190"/>
        <end position="198"/>
    </location>
</feature>
<feature type="disulfide bond" evidence="5">
    <location>
        <begin position="246"/>
        <end position="260"/>
    </location>
</feature>
<feature type="disulfide bond" evidence="5">
    <location>
        <begin position="358"/>
        <end position="615"/>
    </location>
</feature>
<feature type="disulfide bond" evidence="5">
    <location>
        <begin position="364"/>
        <end position="396"/>
    </location>
</feature>
<feature type="disulfide bond" evidence="5">
    <location>
        <begin position="374"/>
        <end position="387"/>
    </location>
</feature>
<feature type="disulfide bond" evidence="5">
    <location>
        <begin position="421"/>
        <end position="693"/>
    </location>
</feature>
<feature type="disulfide bond" evidence="5">
    <location>
        <begin position="437"/>
        <end position="656"/>
    </location>
</feature>
<feature type="disulfide bond" evidence="5">
    <location>
        <begin position="469"/>
        <end position="542"/>
    </location>
</feature>
<feature type="disulfide bond" evidence="5">
    <location>
        <begin position="493"/>
        <end position="684"/>
    </location>
</feature>
<feature type="disulfide bond" evidence="5">
    <location>
        <begin position="503"/>
        <end position="517"/>
    </location>
</feature>
<feature type="disulfide bond" evidence="5">
    <location>
        <begin position="514"/>
        <end position="525"/>
    </location>
</feature>
<feature type="disulfide bond" evidence="5">
    <location>
        <begin position="582"/>
        <end position="596"/>
    </location>
</feature>
<feature type="disulfide bond" evidence="5">
    <location>
        <begin position="634"/>
        <end position="639"/>
    </location>
</feature>
<keyword id="KW-1015">Disulfide bond</keyword>
<keyword id="KW-0325">Glycoprotein</keyword>
<keyword id="KW-0406">Ion transport</keyword>
<keyword id="KW-0408">Iron</keyword>
<keyword id="KW-0410">Iron transport</keyword>
<keyword id="KW-0479">Metal-binding</keyword>
<keyword id="KW-0488">Methylation</keyword>
<keyword id="KW-0597">Phosphoprotein</keyword>
<keyword id="KW-1185">Reference proteome</keyword>
<keyword id="KW-0677">Repeat</keyword>
<keyword id="KW-0964">Secreted</keyword>
<keyword id="KW-0732">Signal</keyword>
<keyword id="KW-0813">Transport</keyword>
<dbReference type="EMBL" id="AB222114">
    <property type="protein sequence ID" value="BAF62359.1"/>
    <property type="molecule type" value="mRNA"/>
</dbReference>
<dbReference type="RefSeq" id="NP_001138307.1">
    <property type="nucleotide sequence ID" value="NM_001144835.1"/>
</dbReference>
<dbReference type="SMR" id="A5A6I6"/>
<dbReference type="FunCoup" id="A5A6I6">
    <property type="interactions" value="895"/>
</dbReference>
<dbReference type="STRING" id="9598.ENSPTRP00000026561"/>
<dbReference type="MEROPS" id="S60.975"/>
<dbReference type="GlyCosmos" id="A5A6I6">
    <property type="glycosylation" value="2 sites, No reported glycans"/>
</dbReference>
<dbReference type="PaxDb" id="9598-ENSPTRP00000026561"/>
<dbReference type="Ensembl" id="ENSPTRT00000028781.5">
    <property type="protein sequence ID" value="ENSPTRP00000026561.4"/>
    <property type="gene ID" value="ENSPTRG00000015412.6"/>
</dbReference>
<dbReference type="GeneID" id="460710"/>
<dbReference type="KEGG" id="ptr:460710"/>
<dbReference type="CTD" id="7018"/>
<dbReference type="VGNC" id="VGNC:12236">
    <property type="gene designation" value="TF"/>
</dbReference>
<dbReference type="eggNOG" id="ENOG502QT0C">
    <property type="taxonomic scope" value="Eukaryota"/>
</dbReference>
<dbReference type="GeneTree" id="ENSGT00940000154388"/>
<dbReference type="HOGENOM" id="CLU_011309_1_0_1"/>
<dbReference type="InParanoid" id="A5A6I6"/>
<dbReference type="OMA" id="DEWSINS"/>
<dbReference type="OrthoDB" id="2079at9604"/>
<dbReference type="TreeFam" id="TF324013"/>
<dbReference type="Proteomes" id="UP000002277">
    <property type="component" value="Chromosome 3"/>
</dbReference>
<dbReference type="Bgee" id="ENSPTRG00000015412">
    <property type="expression patterns" value="Expressed in liver and 18 other cell types or tissues"/>
</dbReference>
<dbReference type="GO" id="GO:0016324">
    <property type="term" value="C:apical plasma membrane"/>
    <property type="evidence" value="ECO:0007669"/>
    <property type="project" value="Ensembl"/>
</dbReference>
<dbReference type="GO" id="GO:0009925">
    <property type="term" value="C:basal plasma membrane"/>
    <property type="evidence" value="ECO:0007669"/>
    <property type="project" value="Ensembl"/>
</dbReference>
<dbReference type="GO" id="GO:0009986">
    <property type="term" value="C:cell surface"/>
    <property type="evidence" value="ECO:0007669"/>
    <property type="project" value="Ensembl"/>
</dbReference>
<dbReference type="GO" id="GO:0005905">
    <property type="term" value="C:clathrin-coated pit"/>
    <property type="evidence" value="ECO:0007669"/>
    <property type="project" value="Ensembl"/>
</dbReference>
<dbReference type="GO" id="GO:0005769">
    <property type="term" value="C:early endosome"/>
    <property type="evidence" value="ECO:0000318"/>
    <property type="project" value="GO_Central"/>
</dbReference>
<dbReference type="GO" id="GO:0030139">
    <property type="term" value="C:endocytic vesicle"/>
    <property type="evidence" value="ECO:0007669"/>
    <property type="project" value="Ensembl"/>
</dbReference>
<dbReference type="GO" id="GO:0005615">
    <property type="term" value="C:extracellular space"/>
    <property type="evidence" value="ECO:0000318"/>
    <property type="project" value="GO_Central"/>
</dbReference>
<dbReference type="GO" id="GO:1990712">
    <property type="term" value="C:HFE-transferrin receptor complex"/>
    <property type="evidence" value="ECO:0007669"/>
    <property type="project" value="Ensembl"/>
</dbReference>
<dbReference type="GO" id="GO:0005770">
    <property type="term" value="C:late endosome"/>
    <property type="evidence" value="ECO:0007669"/>
    <property type="project" value="Ensembl"/>
</dbReference>
<dbReference type="GO" id="GO:0048471">
    <property type="term" value="C:perinuclear region of cytoplasm"/>
    <property type="evidence" value="ECO:0007669"/>
    <property type="project" value="Ensembl"/>
</dbReference>
<dbReference type="GO" id="GO:0005886">
    <property type="term" value="C:plasma membrane"/>
    <property type="evidence" value="ECO:0000318"/>
    <property type="project" value="GO_Central"/>
</dbReference>
<dbReference type="GO" id="GO:0055037">
    <property type="term" value="C:recycling endosome"/>
    <property type="evidence" value="ECO:0000318"/>
    <property type="project" value="GO_Central"/>
</dbReference>
<dbReference type="GO" id="GO:0019899">
    <property type="term" value="F:enzyme binding"/>
    <property type="evidence" value="ECO:0007669"/>
    <property type="project" value="Ensembl"/>
</dbReference>
<dbReference type="GO" id="GO:0008199">
    <property type="term" value="F:ferric iron binding"/>
    <property type="evidence" value="ECO:0007669"/>
    <property type="project" value="InterPro"/>
</dbReference>
<dbReference type="GO" id="GO:0008198">
    <property type="term" value="F:ferrous iron binding"/>
    <property type="evidence" value="ECO:0007669"/>
    <property type="project" value="Ensembl"/>
</dbReference>
<dbReference type="GO" id="GO:0034986">
    <property type="term" value="F:iron chaperone activity"/>
    <property type="evidence" value="ECO:0007669"/>
    <property type="project" value="Ensembl"/>
</dbReference>
<dbReference type="GO" id="GO:1990459">
    <property type="term" value="F:transferrin receptor binding"/>
    <property type="evidence" value="ECO:0007669"/>
    <property type="project" value="Ensembl"/>
</dbReference>
<dbReference type="GO" id="GO:0044325">
    <property type="term" value="F:transmembrane transporter binding"/>
    <property type="evidence" value="ECO:0007669"/>
    <property type="project" value="Ensembl"/>
</dbReference>
<dbReference type="GO" id="GO:0019731">
    <property type="term" value="P:antibacterial humoral response"/>
    <property type="evidence" value="ECO:0000318"/>
    <property type="project" value="GO_Central"/>
</dbReference>
<dbReference type="GO" id="GO:0071281">
    <property type="term" value="P:cellular response to iron ion"/>
    <property type="evidence" value="ECO:0007669"/>
    <property type="project" value="Ensembl"/>
</dbReference>
<dbReference type="GO" id="GO:0006879">
    <property type="term" value="P:intracellular iron ion homeostasis"/>
    <property type="evidence" value="ECO:0007669"/>
    <property type="project" value="Ensembl"/>
</dbReference>
<dbReference type="GO" id="GO:0006826">
    <property type="term" value="P:iron ion transport"/>
    <property type="evidence" value="ECO:0000318"/>
    <property type="project" value="GO_Central"/>
</dbReference>
<dbReference type="GO" id="GO:0060586">
    <property type="term" value="P:multicellular organismal-level iron ion homeostasis"/>
    <property type="evidence" value="ECO:0007669"/>
    <property type="project" value="Ensembl"/>
</dbReference>
<dbReference type="GO" id="GO:0030316">
    <property type="term" value="P:osteoclast differentiation"/>
    <property type="evidence" value="ECO:0007669"/>
    <property type="project" value="Ensembl"/>
</dbReference>
<dbReference type="GO" id="GO:0032436">
    <property type="term" value="P:positive regulation of proteasomal ubiquitin-dependent protein catabolic process"/>
    <property type="evidence" value="ECO:0007669"/>
    <property type="project" value="Ensembl"/>
</dbReference>
<dbReference type="GO" id="GO:0048260">
    <property type="term" value="P:positive regulation of receptor-mediated endocytosis"/>
    <property type="evidence" value="ECO:0007669"/>
    <property type="project" value="Ensembl"/>
</dbReference>
<dbReference type="GO" id="GO:0034756">
    <property type="term" value="P:regulation of iron ion transport"/>
    <property type="evidence" value="ECO:0007669"/>
    <property type="project" value="Ensembl"/>
</dbReference>
<dbReference type="CDD" id="cd13617">
    <property type="entry name" value="PBP2_transferrin_C"/>
    <property type="match status" value="1"/>
</dbReference>
<dbReference type="CDD" id="cd13618">
    <property type="entry name" value="PBP2_transferrin_N"/>
    <property type="match status" value="1"/>
</dbReference>
<dbReference type="FunFam" id="3.40.190.10:FF:000095">
    <property type="entry name" value="Lactotransferrin"/>
    <property type="match status" value="1"/>
</dbReference>
<dbReference type="FunFam" id="3.40.190.10:FF:000105">
    <property type="entry name" value="Serotransferrin"/>
    <property type="match status" value="1"/>
</dbReference>
<dbReference type="Gene3D" id="3.40.190.10">
    <property type="entry name" value="Periplasmic binding protein-like II"/>
    <property type="match status" value="4"/>
</dbReference>
<dbReference type="InterPro" id="IPR030685">
    <property type="entry name" value="Serotransferrin_mammal"/>
</dbReference>
<dbReference type="InterPro" id="IPR016357">
    <property type="entry name" value="Transferrin"/>
</dbReference>
<dbReference type="InterPro" id="IPR001156">
    <property type="entry name" value="Transferrin-like_dom"/>
</dbReference>
<dbReference type="InterPro" id="IPR018195">
    <property type="entry name" value="Transferrin_Fe_BS"/>
</dbReference>
<dbReference type="PANTHER" id="PTHR11485:SF31">
    <property type="entry name" value="SEROTRANSFERRIN"/>
    <property type="match status" value="1"/>
</dbReference>
<dbReference type="PANTHER" id="PTHR11485">
    <property type="entry name" value="TRANSFERRIN"/>
    <property type="match status" value="1"/>
</dbReference>
<dbReference type="Pfam" id="PF00405">
    <property type="entry name" value="Transferrin"/>
    <property type="match status" value="2"/>
</dbReference>
<dbReference type="PIRSF" id="PIRSF500682">
    <property type="entry name" value="Serotransferrin"/>
    <property type="match status" value="1"/>
</dbReference>
<dbReference type="PIRSF" id="PIRSF002549">
    <property type="entry name" value="Transferrin"/>
    <property type="match status" value="1"/>
</dbReference>
<dbReference type="PRINTS" id="PR00422">
    <property type="entry name" value="TRANSFERRIN"/>
</dbReference>
<dbReference type="SMART" id="SM00094">
    <property type="entry name" value="TR_FER"/>
    <property type="match status" value="2"/>
</dbReference>
<dbReference type="SUPFAM" id="SSF53850">
    <property type="entry name" value="Periplasmic binding protein-like II"/>
    <property type="match status" value="2"/>
</dbReference>
<dbReference type="PROSITE" id="PS00205">
    <property type="entry name" value="TRANSFERRIN_LIKE_1"/>
    <property type="match status" value="2"/>
</dbReference>
<dbReference type="PROSITE" id="PS00206">
    <property type="entry name" value="TRANSFERRIN_LIKE_2"/>
    <property type="match status" value="2"/>
</dbReference>
<dbReference type="PROSITE" id="PS00207">
    <property type="entry name" value="TRANSFERRIN_LIKE_3"/>
    <property type="match status" value="2"/>
</dbReference>
<dbReference type="PROSITE" id="PS51408">
    <property type="entry name" value="TRANSFERRIN_LIKE_4"/>
    <property type="match status" value="2"/>
</dbReference>
<reference key="1">
    <citation type="journal article" date="2007" name="Gene">
        <title>Mapping of chimpanzee full-length cDNAs onto the human genome unveils large potential divergence of the transcriptome.</title>
        <authorList>
            <person name="Sakate R."/>
            <person name="Suto Y."/>
            <person name="Imanishi T."/>
            <person name="Tanoue T."/>
            <person name="Hida M."/>
            <person name="Hayasaka I."/>
            <person name="Kusuda J."/>
            <person name="Gojobori T."/>
            <person name="Hashimoto K."/>
            <person name="Hirai M."/>
        </authorList>
    </citation>
    <scope>NUCLEOTIDE SEQUENCE [MRNA]</scope>
    <source>
        <tissue>Cerebellum</tissue>
    </source>
</reference>
<sequence>MRLAVGALLVCAVLGLCLAVPDKTVRWCAVSEHEATKCQSFRDHMKSVIPSDGPSVACVKKASYLDCIRAIAANEADAVTLDAGLVYDAYLAPNNLKPVVAEFYGSKEDPQTFYYAVAVVKKDSGFQMNQLRGKKSCHTGLGRSAGWNIPIGLLYCDLPEPRKPLEKAVANFFSGSCAPCADGTDFPQLCQLCPGCGCSTLNQYFGYSGAFKCLKDGAGDVAFVKHSTIFENLANKADRDQYELLCLDNTRKPVDEYKDCHLAQVPSHTVVARSMGGKEDLIWELLNQAQEHFGKDKSKEFQLFSSPHGKDLLFKDSAHGFLKVPPRMDAKMYLGYEYVTAIRNLREGTCPEATTDECKPVKWCALSHHERLKCDEWSVNSVGKIECVSAETTEDCIAKIMNGEADAMSLDGGFVYIAGKCGLVPVLAENYNKNDNCEDTPEAGYFAVAVVKKSASDLTWDNLKGKKSCHTAVGRTAGWNIPMGLLYNKINHCRFDEFFSEGCAPGSKKDSSLCKLCMGSGPNLCEPNNKEGYYGYTGAFRCLVEKGDVAFVKHQTVPQNTGGKNPDPWAKNLNEKDYELLCLDGTRKPVKEYANCHLARAPNHAVVTRKDKEACVHKILRQQQHLFGSNVTDCSGNFCLFRSETKDLLFRDDTVCLAKLHDRNTYEKYLGEEYVKAVGNLRKCSTSSLLEACTFRRP</sequence>
<evidence type="ECO:0000250" key="1"/>
<evidence type="ECO:0000250" key="2">
    <source>
        <dbReference type="UniProtKB" id="P02787"/>
    </source>
</evidence>
<evidence type="ECO:0000250" key="3">
    <source>
        <dbReference type="UniProtKB" id="P12346"/>
    </source>
</evidence>
<evidence type="ECO:0000255" key="4"/>
<evidence type="ECO:0000255" key="5">
    <source>
        <dbReference type="PROSITE-ProRule" id="PRU00741"/>
    </source>
</evidence>
<protein>
    <recommendedName>
        <fullName>Serotransferrin</fullName>
        <shortName>Transferrin</shortName>
    </recommendedName>
    <alternativeName>
        <fullName>Beta-1 metal-binding globulin</fullName>
    </alternativeName>
    <alternativeName>
        <fullName>Siderophilin</fullName>
    </alternativeName>
</protein>
<accession>A5A6I6</accession>
<organism>
    <name type="scientific">Pan troglodytes</name>
    <name type="common">Chimpanzee</name>
    <dbReference type="NCBI Taxonomy" id="9598"/>
    <lineage>
        <taxon>Eukaryota</taxon>
        <taxon>Metazoa</taxon>
        <taxon>Chordata</taxon>
        <taxon>Craniata</taxon>
        <taxon>Vertebrata</taxon>
        <taxon>Euteleostomi</taxon>
        <taxon>Mammalia</taxon>
        <taxon>Eutheria</taxon>
        <taxon>Euarchontoglires</taxon>
        <taxon>Primates</taxon>
        <taxon>Haplorrhini</taxon>
        <taxon>Catarrhini</taxon>
        <taxon>Hominidae</taxon>
        <taxon>Pan</taxon>
    </lineage>
</organism>
<comment type="function">
    <text evidence="1">Transferrins are iron binding transport proteins which can bind two Fe(3+) ions in association with the binding of an anion, usually bicarbonate. It is responsible for the transport of iron from sites of absorption and heme degradation to those of storage and utilization. Serum transferrin may also have a further role in stimulating cell proliferation (By similarity).</text>
</comment>
<comment type="subunit">
    <text evidence="2">Monomer. Part of a complex composed of SLC40A1/ferroportin, TF/transferrin and HEPH/hephaestin that transfers iron from cells to transferrin.</text>
</comment>
<comment type="subcellular location">
    <subcellularLocation>
        <location evidence="1">Secreted</location>
    </subcellularLocation>
</comment>
<comment type="tissue specificity">
    <text>Expressed by the liver and secreted in plasma.</text>
</comment>
<comment type="similarity">
    <text evidence="5">Belongs to the transferrin family.</text>
</comment>
<name>TRFE_PANTR</name>
<gene>
    <name type="primary">TF</name>
</gene>